<reference key="1">
    <citation type="journal article" date="2016" name="Genome Announc.">
        <title>Complete genome sequence of Alkaliphilus metalliredigens strain QYMF, an alkaliphilic and metal-reducing bacterium isolated from borax-contaminated leachate ponds.</title>
        <authorList>
            <person name="Hwang C."/>
            <person name="Copeland A."/>
            <person name="Lucas S."/>
            <person name="Lapidus A."/>
            <person name="Barry K."/>
            <person name="Detter J.C."/>
            <person name="Glavina Del Rio T."/>
            <person name="Hammon N."/>
            <person name="Israni S."/>
            <person name="Dalin E."/>
            <person name="Tice H."/>
            <person name="Pitluck S."/>
            <person name="Chertkov O."/>
            <person name="Brettin T."/>
            <person name="Bruce D."/>
            <person name="Han C."/>
            <person name="Schmutz J."/>
            <person name="Larimer F."/>
            <person name="Land M.L."/>
            <person name="Hauser L."/>
            <person name="Kyrpides N."/>
            <person name="Mikhailova N."/>
            <person name="Ye Q."/>
            <person name="Zhou J."/>
            <person name="Richardson P."/>
            <person name="Fields M.W."/>
        </authorList>
    </citation>
    <scope>NUCLEOTIDE SEQUENCE [LARGE SCALE GENOMIC DNA]</scope>
    <source>
        <strain>QYMF</strain>
    </source>
</reference>
<dbReference type="EC" id="3.1.1.29" evidence="1"/>
<dbReference type="EMBL" id="CP000724">
    <property type="protein sequence ID" value="ABR46395.1"/>
    <property type="molecule type" value="Genomic_DNA"/>
</dbReference>
<dbReference type="RefSeq" id="WP_011971304.1">
    <property type="nucleotide sequence ID" value="NC_009633.1"/>
</dbReference>
<dbReference type="SMR" id="A6TJM7"/>
<dbReference type="STRING" id="293826.Amet_0158"/>
<dbReference type="KEGG" id="amt:Amet_0158"/>
<dbReference type="eggNOG" id="COG0193">
    <property type="taxonomic scope" value="Bacteria"/>
</dbReference>
<dbReference type="HOGENOM" id="CLU_062456_4_1_9"/>
<dbReference type="OrthoDB" id="9800507at2"/>
<dbReference type="Proteomes" id="UP000001572">
    <property type="component" value="Chromosome"/>
</dbReference>
<dbReference type="GO" id="GO:0005737">
    <property type="term" value="C:cytoplasm"/>
    <property type="evidence" value="ECO:0007669"/>
    <property type="project" value="UniProtKB-SubCell"/>
</dbReference>
<dbReference type="GO" id="GO:0004045">
    <property type="term" value="F:peptidyl-tRNA hydrolase activity"/>
    <property type="evidence" value="ECO:0007669"/>
    <property type="project" value="UniProtKB-UniRule"/>
</dbReference>
<dbReference type="GO" id="GO:0000049">
    <property type="term" value="F:tRNA binding"/>
    <property type="evidence" value="ECO:0007669"/>
    <property type="project" value="UniProtKB-UniRule"/>
</dbReference>
<dbReference type="GO" id="GO:0006515">
    <property type="term" value="P:protein quality control for misfolded or incompletely synthesized proteins"/>
    <property type="evidence" value="ECO:0007669"/>
    <property type="project" value="UniProtKB-UniRule"/>
</dbReference>
<dbReference type="GO" id="GO:0072344">
    <property type="term" value="P:rescue of stalled ribosome"/>
    <property type="evidence" value="ECO:0007669"/>
    <property type="project" value="UniProtKB-UniRule"/>
</dbReference>
<dbReference type="CDD" id="cd00462">
    <property type="entry name" value="PTH"/>
    <property type="match status" value="1"/>
</dbReference>
<dbReference type="FunFam" id="3.40.50.1470:FF:000001">
    <property type="entry name" value="Peptidyl-tRNA hydrolase"/>
    <property type="match status" value="1"/>
</dbReference>
<dbReference type="Gene3D" id="3.40.50.1470">
    <property type="entry name" value="Peptidyl-tRNA hydrolase"/>
    <property type="match status" value="1"/>
</dbReference>
<dbReference type="HAMAP" id="MF_00083">
    <property type="entry name" value="Pept_tRNA_hydro_bact"/>
    <property type="match status" value="1"/>
</dbReference>
<dbReference type="InterPro" id="IPR001328">
    <property type="entry name" value="Pept_tRNA_hydro"/>
</dbReference>
<dbReference type="InterPro" id="IPR018171">
    <property type="entry name" value="Pept_tRNA_hydro_CS"/>
</dbReference>
<dbReference type="InterPro" id="IPR036416">
    <property type="entry name" value="Pept_tRNA_hydro_sf"/>
</dbReference>
<dbReference type="NCBIfam" id="TIGR00447">
    <property type="entry name" value="pth"/>
    <property type="match status" value="1"/>
</dbReference>
<dbReference type="PANTHER" id="PTHR17224">
    <property type="entry name" value="PEPTIDYL-TRNA HYDROLASE"/>
    <property type="match status" value="1"/>
</dbReference>
<dbReference type="PANTHER" id="PTHR17224:SF1">
    <property type="entry name" value="PEPTIDYL-TRNA HYDROLASE"/>
    <property type="match status" value="1"/>
</dbReference>
<dbReference type="Pfam" id="PF01195">
    <property type="entry name" value="Pept_tRNA_hydro"/>
    <property type="match status" value="1"/>
</dbReference>
<dbReference type="SUPFAM" id="SSF53178">
    <property type="entry name" value="Peptidyl-tRNA hydrolase-like"/>
    <property type="match status" value="1"/>
</dbReference>
<dbReference type="PROSITE" id="PS01195">
    <property type="entry name" value="PEPT_TRNA_HYDROL_1"/>
    <property type="match status" value="1"/>
</dbReference>
<dbReference type="PROSITE" id="PS01196">
    <property type="entry name" value="PEPT_TRNA_HYDROL_2"/>
    <property type="match status" value="1"/>
</dbReference>
<proteinExistence type="inferred from homology"/>
<protein>
    <recommendedName>
        <fullName evidence="1">Peptidyl-tRNA hydrolase</fullName>
        <shortName evidence="1">Pth</shortName>
        <ecNumber evidence="1">3.1.1.29</ecNumber>
    </recommendedName>
</protein>
<keyword id="KW-0963">Cytoplasm</keyword>
<keyword id="KW-0378">Hydrolase</keyword>
<keyword id="KW-1185">Reference proteome</keyword>
<keyword id="KW-0694">RNA-binding</keyword>
<keyword id="KW-0820">tRNA-binding</keyword>
<gene>
    <name evidence="1" type="primary">pth</name>
    <name type="ordered locus">Amet_0158</name>
</gene>
<accession>A6TJM7</accession>
<feature type="chain" id="PRO_1000057544" description="Peptidyl-tRNA hydrolase">
    <location>
        <begin position="1"/>
        <end position="185"/>
    </location>
</feature>
<feature type="active site" description="Proton acceptor" evidence="1">
    <location>
        <position position="19"/>
    </location>
</feature>
<feature type="binding site" evidence="1">
    <location>
        <position position="14"/>
    </location>
    <ligand>
        <name>tRNA</name>
        <dbReference type="ChEBI" id="CHEBI:17843"/>
    </ligand>
</feature>
<feature type="binding site" evidence="1">
    <location>
        <position position="64"/>
    </location>
    <ligand>
        <name>tRNA</name>
        <dbReference type="ChEBI" id="CHEBI:17843"/>
    </ligand>
</feature>
<feature type="binding site" evidence="1">
    <location>
        <position position="66"/>
    </location>
    <ligand>
        <name>tRNA</name>
        <dbReference type="ChEBI" id="CHEBI:17843"/>
    </ligand>
</feature>
<feature type="binding site" evidence="1">
    <location>
        <position position="112"/>
    </location>
    <ligand>
        <name>tRNA</name>
        <dbReference type="ChEBI" id="CHEBI:17843"/>
    </ligand>
</feature>
<feature type="site" description="Discriminates between blocked and unblocked aminoacyl-tRNA" evidence="1">
    <location>
        <position position="9"/>
    </location>
</feature>
<feature type="site" description="Stabilizes the basic form of H active site to accept a proton" evidence="1">
    <location>
        <position position="91"/>
    </location>
</feature>
<sequence length="185" mass="20593">MYIIVGLGNPGKKYSGTRHNVGFDVIDLLAHRLGITVNKLKHKALYGEARIGGEKVILAKPQTFMNLSGESIREMMQFYKIDPENLIVIYDDIDVKVGSLRIRQSGSAGTHNGMKSTIYQLQTDAFPRIRIGVGRPEFGDLSNYVLGSFTKDEIPLMKESLERATLTVESIVIDGIDKAMNRYNG</sequence>
<name>PTH_ALKMQ</name>
<evidence type="ECO:0000255" key="1">
    <source>
        <dbReference type="HAMAP-Rule" id="MF_00083"/>
    </source>
</evidence>
<organism>
    <name type="scientific">Alkaliphilus metalliredigens (strain QYMF)</name>
    <dbReference type="NCBI Taxonomy" id="293826"/>
    <lineage>
        <taxon>Bacteria</taxon>
        <taxon>Bacillati</taxon>
        <taxon>Bacillota</taxon>
        <taxon>Clostridia</taxon>
        <taxon>Peptostreptococcales</taxon>
        <taxon>Natronincolaceae</taxon>
        <taxon>Alkaliphilus</taxon>
    </lineage>
</organism>
<comment type="function">
    <text evidence="1">Hydrolyzes ribosome-free peptidyl-tRNAs (with 1 or more amino acids incorporated), which drop off the ribosome during protein synthesis, or as a result of ribosome stalling.</text>
</comment>
<comment type="function">
    <text evidence="1">Catalyzes the release of premature peptidyl moieties from peptidyl-tRNA molecules trapped in stalled 50S ribosomal subunits, and thus maintains levels of free tRNAs and 50S ribosomes.</text>
</comment>
<comment type="catalytic activity">
    <reaction evidence="1">
        <text>an N-acyl-L-alpha-aminoacyl-tRNA + H2O = an N-acyl-L-amino acid + a tRNA + H(+)</text>
        <dbReference type="Rhea" id="RHEA:54448"/>
        <dbReference type="Rhea" id="RHEA-COMP:10123"/>
        <dbReference type="Rhea" id="RHEA-COMP:13883"/>
        <dbReference type="ChEBI" id="CHEBI:15377"/>
        <dbReference type="ChEBI" id="CHEBI:15378"/>
        <dbReference type="ChEBI" id="CHEBI:59874"/>
        <dbReference type="ChEBI" id="CHEBI:78442"/>
        <dbReference type="ChEBI" id="CHEBI:138191"/>
        <dbReference type="EC" id="3.1.1.29"/>
    </reaction>
</comment>
<comment type="subunit">
    <text evidence="1">Monomer.</text>
</comment>
<comment type="subcellular location">
    <subcellularLocation>
        <location evidence="1">Cytoplasm</location>
    </subcellularLocation>
</comment>
<comment type="similarity">
    <text evidence="1">Belongs to the PTH family.</text>
</comment>